<evidence type="ECO:0000250" key="1"/>
<evidence type="ECO:0000255" key="2">
    <source>
        <dbReference type="PROSITE-ProRule" id="PRU00031"/>
    </source>
</evidence>
<evidence type="ECO:0000305" key="3"/>
<accession>A8Y7P6</accession>
<keyword id="KW-1015">Disulfide bond</keyword>
<keyword id="KW-0646">Protease inhibitor</keyword>
<keyword id="KW-0964">Secreted</keyword>
<keyword id="KW-0722">Serine protease inhibitor</keyword>
<keyword id="KW-0732">Signal</keyword>
<comment type="function">
    <text evidence="1">Serine protease inhibitor that inhibits trypsin.</text>
</comment>
<comment type="subcellular location">
    <subcellularLocation>
        <location evidence="1">Secreted</location>
    </subcellularLocation>
</comment>
<comment type="tissue specificity">
    <text>Expressed by the venom gland.</text>
</comment>
<comment type="similarity">
    <text evidence="3">Belongs to the venom Kunitz-type family.</text>
</comment>
<sequence>MSSGGLLLLLGLLTLWAELTPISSHDRPKFCNLAPESGRCRGHLRRIYYNLESNKCKVFFYGGCGGNANNFETRDECRQTCGGK</sequence>
<dbReference type="EMBL" id="AM411373">
    <property type="protein sequence ID" value="CAL69614.1"/>
    <property type="molecule type" value="mRNA"/>
</dbReference>
<dbReference type="SMR" id="A8Y7P6"/>
<dbReference type="MEROPS" id="I02.062"/>
<dbReference type="GO" id="GO:0005576">
    <property type="term" value="C:extracellular region"/>
    <property type="evidence" value="ECO:0007669"/>
    <property type="project" value="UniProtKB-SubCell"/>
</dbReference>
<dbReference type="GO" id="GO:0004867">
    <property type="term" value="F:serine-type endopeptidase inhibitor activity"/>
    <property type="evidence" value="ECO:0007669"/>
    <property type="project" value="UniProtKB-KW"/>
</dbReference>
<dbReference type="FunFam" id="4.10.410.10:FF:000021">
    <property type="entry name" value="Serine protease inhibitor, putative"/>
    <property type="match status" value="1"/>
</dbReference>
<dbReference type="Gene3D" id="4.10.410.10">
    <property type="entry name" value="Pancreatic trypsin inhibitor Kunitz domain"/>
    <property type="match status" value="1"/>
</dbReference>
<dbReference type="InterPro" id="IPR002223">
    <property type="entry name" value="Kunitz_BPTI"/>
</dbReference>
<dbReference type="InterPro" id="IPR036880">
    <property type="entry name" value="Kunitz_BPTI_sf"/>
</dbReference>
<dbReference type="InterPro" id="IPR020901">
    <property type="entry name" value="Prtase_inh_Kunz-CS"/>
</dbReference>
<dbReference type="InterPro" id="IPR050098">
    <property type="entry name" value="TFPI/VKTCI-like"/>
</dbReference>
<dbReference type="PANTHER" id="PTHR10083">
    <property type="entry name" value="KUNITZ-TYPE PROTEASE INHIBITOR-RELATED"/>
    <property type="match status" value="1"/>
</dbReference>
<dbReference type="Pfam" id="PF00014">
    <property type="entry name" value="Kunitz_BPTI"/>
    <property type="match status" value="1"/>
</dbReference>
<dbReference type="PRINTS" id="PR00759">
    <property type="entry name" value="BASICPTASE"/>
</dbReference>
<dbReference type="SMART" id="SM00131">
    <property type="entry name" value="KU"/>
    <property type="match status" value="1"/>
</dbReference>
<dbReference type="SUPFAM" id="SSF57362">
    <property type="entry name" value="BPTI-like"/>
    <property type="match status" value="1"/>
</dbReference>
<dbReference type="PROSITE" id="PS00280">
    <property type="entry name" value="BPTI_KUNITZ_1"/>
    <property type="match status" value="1"/>
</dbReference>
<dbReference type="PROSITE" id="PS50279">
    <property type="entry name" value="BPTI_KUNITZ_2"/>
    <property type="match status" value="1"/>
</dbReference>
<protein>
    <recommendedName>
        <fullName>Kunitz-type serine protease inhibitor B6</fullName>
    </recommendedName>
    <alternativeName>
        <fullName>BPTI-6</fullName>
    </alternativeName>
    <alternativeName>
        <fullName>Trypsin inhibitor 6</fullName>
    </alternativeName>
    <alternativeName>
        <fullName>Trypsin inhibitor B6</fullName>
    </alternativeName>
</protein>
<name>VKTB6_DABSI</name>
<feature type="signal peptide" evidence="1">
    <location>
        <begin position="1"/>
        <end position="24"/>
    </location>
</feature>
<feature type="chain" id="PRO_5000284439" description="Kunitz-type serine protease inhibitor B6">
    <location>
        <begin position="25"/>
        <end position="84"/>
    </location>
</feature>
<feature type="domain" description="BPTI/Kunitz inhibitor" evidence="2">
    <location>
        <begin position="31"/>
        <end position="81"/>
    </location>
</feature>
<feature type="site" description="Reactive bond for trypsin" evidence="1">
    <location>
        <begin position="41"/>
        <end position="42"/>
    </location>
</feature>
<feature type="disulfide bond" evidence="2">
    <location>
        <begin position="31"/>
        <end position="81"/>
    </location>
</feature>
<feature type="disulfide bond" evidence="2">
    <location>
        <begin position="40"/>
        <end position="64"/>
    </location>
</feature>
<feature type="disulfide bond" evidence="2">
    <location>
        <begin position="56"/>
        <end position="77"/>
    </location>
</feature>
<reference key="1">
    <citation type="submission" date="2006-11" db="EMBL/GenBank/DDBJ databases">
        <title>BPTI petides from Burmese Daboia russellii siamensis.</title>
        <authorList>
            <person name="Guo C."/>
            <person name="McClean S."/>
            <person name="Shaw C."/>
            <person name="Rao P."/>
            <person name="Ye M."/>
            <person name="Anthony John B."/>
        </authorList>
    </citation>
    <scope>NUCLEOTIDE SEQUENCE [MRNA]</scope>
    <source>
        <strain>Burma</strain>
        <tissue>Venom gland</tissue>
    </source>
</reference>
<organism>
    <name type="scientific">Daboia siamensis</name>
    <name type="common">Eastern Russel's viper</name>
    <name type="synonym">Daboia russelii siamensis</name>
    <dbReference type="NCBI Taxonomy" id="343250"/>
    <lineage>
        <taxon>Eukaryota</taxon>
        <taxon>Metazoa</taxon>
        <taxon>Chordata</taxon>
        <taxon>Craniata</taxon>
        <taxon>Vertebrata</taxon>
        <taxon>Euteleostomi</taxon>
        <taxon>Lepidosauria</taxon>
        <taxon>Squamata</taxon>
        <taxon>Bifurcata</taxon>
        <taxon>Unidentata</taxon>
        <taxon>Episquamata</taxon>
        <taxon>Toxicofera</taxon>
        <taxon>Serpentes</taxon>
        <taxon>Colubroidea</taxon>
        <taxon>Viperidae</taxon>
        <taxon>Viperinae</taxon>
        <taxon>Daboia</taxon>
    </lineage>
</organism>
<proteinExistence type="evidence at transcript level"/>